<reference key="1">
    <citation type="journal article" date="2006" name="J. Bacteriol.">
        <title>Chromosome rearrangement and diversification of Francisella tularensis revealed by the type B (OSU18) genome sequence.</title>
        <authorList>
            <person name="Petrosino J.F."/>
            <person name="Xiang Q."/>
            <person name="Karpathy S.E."/>
            <person name="Jiang H."/>
            <person name="Yerrapragada S."/>
            <person name="Liu Y."/>
            <person name="Gioia J."/>
            <person name="Hemphill L."/>
            <person name="Gonzalez A."/>
            <person name="Raghavan T.M."/>
            <person name="Uzman A."/>
            <person name="Fox G.E."/>
            <person name="Highlander S."/>
            <person name="Reichard M."/>
            <person name="Morton R.J."/>
            <person name="Clinkenbeard K.D."/>
            <person name="Weinstock G.M."/>
        </authorList>
    </citation>
    <scope>NUCLEOTIDE SEQUENCE [LARGE SCALE GENOMIC DNA]</scope>
    <source>
        <strain>OSU18</strain>
    </source>
</reference>
<evidence type="ECO:0000255" key="1">
    <source>
        <dbReference type="HAMAP-Rule" id="MF_00374"/>
    </source>
</evidence>
<evidence type="ECO:0000305" key="2"/>
<gene>
    <name evidence="1" type="primary">rpmC</name>
    <name type="ordered locus">FTH_0239</name>
</gene>
<feature type="chain" id="PRO_1000007487" description="Large ribosomal subunit protein uL29">
    <location>
        <begin position="1"/>
        <end position="66"/>
    </location>
</feature>
<dbReference type="EMBL" id="CP000437">
    <property type="protein sequence ID" value="ABI82265.1"/>
    <property type="molecule type" value="Genomic_DNA"/>
</dbReference>
<dbReference type="RefSeq" id="WP_003014341.1">
    <property type="nucleotide sequence ID" value="NC_017463.1"/>
</dbReference>
<dbReference type="SMR" id="Q0BNR9"/>
<dbReference type="KEGG" id="fth:FTH_0239"/>
<dbReference type="GO" id="GO:0022625">
    <property type="term" value="C:cytosolic large ribosomal subunit"/>
    <property type="evidence" value="ECO:0007669"/>
    <property type="project" value="TreeGrafter"/>
</dbReference>
<dbReference type="GO" id="GO:0003735">
    <property type="term" value="F:structural constituent of ribosome"/>
    <property type="evidence" value="ECO:0007669"/>
    <property type="project" value="InterPro"/>
</dbReference>
<dbReference type="GO" id="GO:0006412">
    <property type="term" value="P:translation"/>
    <property type="evidence" value="ECO:0007669"/>
    <property type="project" value="UniProtKB-UniRule"/>
</dbReference>
<dbReference type="CDD" id="cd00427">
    <property type="entry name" value="Ribosomal_L29_HIP"/>
    <property type="match status" value="1"/>
</dbReference>
<dbReference type="Gene3D" id="6.10.140.1970">
    <property type="match status" value="1"/>
</dbReference>
<dbReference type="HAMAP" id="MF_00374">
    <property type="entry name" value="Ribosomal_uL29"/>
    <property type="match status" value="1"/>
</dbReference>
<dbReference type="InterPro" id="IPR050063">
    <property type="entry name" value="Ribosomal_protein_uL29"/>
</dbReference>
<dbReference type="InterPro" id="IPR001854">
    <property type="entry name" value="Ribosomal_uL29"/>
</dbReference>
<dbReference type="InterPro" id="IPR018254">
    <property type="entry name" value="Ribosomal_uL29_CS"/>
</dbReference>
<dbReference type="InterPro" id="IPR036049">
    <property type="entry name" value="Ribosomal_uL29_sf"/>
</dbReference>
<dbReference type="NCBIfam" id="TIGR00012">
    <property type="entry name" value="L29"/>
    <property type="match status" value="1"/>
</dbReference>
<dbReference type="PANTHER" id="PTHR10916">
    <property type="entry name" value="60S RIBOSOMAL PROTEIN L35/50S RIBOSOMAL PROTEIN L29"/>
    <property type="match status" value="1"/>
</dbReference>
<dbReference type="PANTHER" id="PTHR10916:SF0">
    <property type="entry name" value="LARGE RIBOSOMAL SUBUNIT PROTEIN UL29C"/>
    <property type="match status" value="1"/>
</dbReference>
<dbReference type="Pfam" id="PF00831">
    <property type="entry name" value="Ribosomal_L29"/>
    <property type="match status" value="1"/>
</dbReference>
<dbReference type="SUPFAM" id="SSF46561">
    <property type="entry name" value="Ribosomal protein L29 (L29p)"/>
    <property type="match status" value="1"/>
</dbReference>
<dbReference type="PROSITE" id="PS00579">
    <property type="entry name" value="RIBOSOMAL_L29"/>
    <property type="match status" value="1"/>
</dbReference>
<proteinExistence type="inferred from homology"/>
<keyword id="KW-0687">Ribonucleoprotein</keyword>
<keyword id="KW-0689">Ribosomal protein</keyword>
<accession>Q0BNR9</accession>
<comment type="similarity">
    <text evidence="1">Belongs to the universal ribosomal protein uL29 family.</text>
</comment>
<organism>
    <name type="scientific">Francisella tularensis subsp. holarctica (strain OSU18)</name>
    <dbReference type="NCBI Taxonomy" id="393011"/>
    <lineage>
        <taxon>Bacteria</taxon>
        <taxon>Pseudomonadati</taxon>
        <taxon>Pseudomonadota</taxon>
        <taxon>Gammaproteobacteria</taxon>
        <taxon>Thiotrichales</taxon>
        <taxon>Francisellaceae</taxon>
        <taxon>Francisella</taxon>
    </lineage>
</organism>
<name>RL29_FRATO</name>
<sequence>MKRKDTLKDYRGKSIDQLQEVKIELLQQLFSLRMQKGTGQLKKNHLFKSAKRDIARINTIISEKNK</sequence>
<protein>
    <recommendedName>
        <fullName evidence="1">Large ribosomal subunit protein uL29</fullName>
    </recommendedName>
    <alternativeName>
        <fullName evidence="2">50S ribosomal protein L29</fullName>
    </alternativeName>
</protein>